<comment type="catalytic activity">
    <reaction evidence="1 2 3 4">
        <text>Endohydrolysis of (1-&gt;4)-alpha-D-glucosidic linkages in polysaccharides containing three or more (1-&gt;4)-alpha-linked D-glucose units.</text>
        <dbReference type="EC" id="3.2.1.1"/>
    </reaction>
</comment>
<comment type="cofactor">
    <cofactor evidence="1 2 3 4 6">
        <name>Ca(2+)</name>
        <dbReference type="ChEBI" id="CHEBI:29108"/>
    </cofactor>
    <text evidence="1 2 3 4 6">Binds 1 Ca(2+) ion per subunit.</text>
</comment>
<comment type="cofactor">
    <cofactor evidence="1 2 3 4 6">
        <name>chloride</name>
        <dbReference type="ChEBI" id="CHEBI:17996"/>
    </cofactor>
    <text evidence="1 2 3 4 6">Binds 1 Cl(-) ion per subunit.</text>
</comment>
<comment type="subunit">
    <text evidence="5">Monomer. Binds to the sea anemone inhibitor helianthamide (PubMed:27066537).</text>
</comment>
<comment type="subcellular location">
    <subcellularLocation>
        <location>Secreted</location>
        <location>Extracellular space</location>
    </subcellularLocation>
</comment>
<comment type="alternative products">
    <event type="alternative splicing"/>
    <isoform>
        <id>P04746-1</id>
        <name>1</name>
        <sequence type="displayed"/>
    </isoform>
    <isoform>
        <id>P04746-2</id>
        <name>2</name>
        <sequence type="described" ref="VSP_055822 VSP_055823"/>
    </isoform>
</comment>
<comment type="tissue specificity">
    <text evidence="6">Detected in pancreas (at protein level).</text>
</comment>
<comment type="similarity">
    <text evidence="8">Belongs to the glycosyl hydrolase 13 family.</text>
</comment>
<comment type="online information" name="Wikipedia">
    <link uri="https://en.wikipedia.org/wiki/Amylase"/>
    <text>Amylase entry</text>
</comment>
<feature type="signal peptide">
    <location>
        <begin position="1"/>
        <end position="15"/>
    </location>
</feature>
<feature type="chain" id="PRO_0000001397" description="Pancreatic alpha-amylase">
    <location>
        <begin position="16"/>
        <end position="511"/>
    </location>
</feature>
<feature type="active site" description="Nucleophile" evidence="9 10 12">
    <location>
        <position position="212"/>
    </location>
</feature>
<feature type="active site" description="Proton donor" evidence="9 10 11 12">
    <location>
        <position position="248"/>
    </location>
</feature>
<feature type="binding site" evidence="1 2 3 6 24">
    <location>
        <position position="115"/>
    </location>
    <ligand>
        <name>Ca(2+)</name>
        <dbReference type="ChEBI" id="CHEBI:29108"/>
    </ligand>
</feature>
<feature type="binding site" evidence="1 2 3 6 24">
    <location>
        <position position="173"/>
    </location>
    <ligand>
        <name>Ca(2+)</name>
        <dbReference type="ChEBI" id="CHEBI:29108"/>
    </ligand>
</feature>
<feature type="binding site" evidence="1 2 3 6 24">
    <location>
        <position position="182"/>
    </location>
    <ligand>
        <name>Ca(2+)</name>
        <dbReference type="ChEBI" id="CHEBI:29108"/>
    </ligand>
</feature>
<feature type="binding site" evidence="1 2 3 6 24">
    <location>
        <position position="210"/>
    </location>
    <ligand>
        <name>chloride</name>
        <dbReference type="ChEBI" id="CHEBI:17996"/>
    </ligand>
</feature>
<feature type="binding site" evidence="1 2 3 6 24">
    <location>
        <position position="216"/>
    </location>
    <ligand>
        <name>Ca(2+)</name>
        <dbReference type="ChEBI" id="CHEBI:29108"/>
    </ligand>
</feature>
<feature type="binding site" evidence="1 2 3 6 24">
    <location>
        <position position="313"/>
    </location>
    <ligand>
        <name>chloride</name>
        <dbReference type="ChEBI" id="CHEBI:17996"/>
    </ligand>
</feature>
<feature type="binding site" evidence="1 2 3 6 24">
    <location>
        <position position="352"/>
    </location>
    <ligand>
        <name>chloride</name>
        <dbReference type="ChEBI" id="CHEBI:17996"/>
    </ligand>
</feature>
<feature type="site" description="Transition state stabilizer" evidence="9 10 12">
    <location>
        <position position="315"/>
    </location>
</feature>
<feature type="modified residue" description="Pyrrolidone carboxylic acid" evidence="3 6">
    <location>
        <position position="16"/>
    </location>
</feature>
<feature type="glycosylation site" description="N-linked (GlcNAc...) asparagine" evidence="1 2 3">
    <location>
        <position position="476"/>
    </location>
</feature>
<feature type="disulfide bond" evidence="1 2 3 6 24">
    <location>
        <begin position="43"/>
        <end position="101"/>
    </location>
</feature>
<feature type="disulfide bond" evidence="1 2 3 6 24">
    <location>
        <begin position="85"/>
        <end position="130"/>
    </location>
</feature>
<feature type="disulfide bond" evidence="1 2 3 6 24">
    <location>
        <begin position="156"/>
        <end position="175"/>
    </location>
</feature>
<feature type="disulfide bond" evidence="1 2 3 6 24">
    <location>
        <begin position="393"/>
        <end position="399"/>
    </location>
</feature>
<feature type="disulfide bond" evidence="1 2 3 6 24">
    <location>
        <begin position="465"/>
        <end position="477"/>
    </location>
</feature>
<feature type="splice variant" id="VSP_055822" description="In isoform 2." evidence="7">
    <original>IDLGGEPIKSSDYFGN</original>
    <variation>HQYLYAYKISSYSLEN</variation>
    <location>
        <begin position="250"/>
        <end position="265"/>
    </location>
</feature>
<feature type="splice variant" id="VSP_055823" description="In isoform 2." evidence="7">
    <location>
        <begin position="266"/>
        <end position="511"/>
    </location>
</feature>
<feature type="mutagenesis site" description="Abolishes chloride binding; strongly reduces activity." evidence="3">
    <original>R</original>
    <variation>A</variation>
    <variation>Q</variation>
    <location>
        <position position="210"/>
    </location>
</feature>
<feature type="mutagenesis site" description="Abolishes activity." evidence="1 3 4">
    <original>D</original>
    <variation>A</variation>
    <variation>N</variation>
    <location>
        <position position="212"/>
    </location>
</feature>
<feature type="mutagenesis site" description="Reduces activity." evidence="3 4">
    <original>E</original>
    <variation>A</variation>
    <variation>Q</variation>
    <location>
        <position position="248"/>
    </location>
</feature>
<feature type="mutagenesis site" description="Reduces affinity for chloride; reduces activity." evidence="3">
    <original>N</original>
    <variation>S</variation>
    <location>
        <position position="313"/>
    </location>
</feature>
<feature type="mutagenesis site" description="Strongly reduces activity." evidence="3 4">
    <original>D</original>
    <variation>A</variation>
    <variation>N</variation>
    <location>
        <position position="315"/>
    </location>
</feature>
<feature type="mutagenesis site" description="Abolishes chloride binding; has only slight effect on activity." evidence="3">
    <original>R</original>
    <variation>A</variation>
    <location>
        <position position="352"/>
    </location>
</feature>
<feature type="strand" evidence="28">
    <location>
        <begin position="27"/>
        <end position="31"/>
    </location>
</feature>
<feature type="helix" evidence="28">
    <location>
        <begin position="36"/>
        <end position="45"/>
    </location>
</feature>
<feature type="turn" evidence="28">
    <location>
        <begin position="46"/>
        <end position="51"/>
    </location>
</feature>
<feature type="strand" evidence="28">
    <location>
        <begin position="54"/>
        <end position="57"/>
    </location>
</feature>
<feature type="turn" evidence="28">
    <location>
        <begin position="67"/>
        <end position="70"/>
    </location>
</feature>
<feature type="helix" evidence="28">
    <location>
        <begin position="73"/>
        <end position="77"/>
    </location>
</feature>
<feature type="strand" evidence="28">
    <location>
        <begin position="78"/>
        <end position="80"/>
    </location>
</feature>
<feature type="helix" evidence="28">
    <location>
        <begin position="91"/>
        <end position="103"/>
    </location>
</feature>
<feature type="strand" evidence="28">
    <location>
        <begin position="107"/>
        <end position="112"/>
    </location>
</feature>
<feature type="strand" evidence="28">
    <location>
        <begin position="115"/>
        <end position="119"/>
    </location>
</feature>
<feature type="strand" evidence="28">
    <location>
        <begin position="124"/>
        <end position="126"/>
    </location>
</feature>
<feature type="strand" evidence="26">
    <location>
        <begin position="128"/>
        <end position="130"/>
    </location>
</feature>
<feature type="turn" evidence="28">
    <location>
        <begin position="136"/>
        <end position="139"/>
    </location>
</feature>
<feature type="turn" evidence="28">
    <location>
        <begin position="142"/>
        <end position="145"/>
    </location>
</feature>
<feature type="helix" evidence="28">
    <location>
        <begin position="148"/>
        <end position="150"/>
    </location>
</feature>
<feature type="turn" evidence="28">
    <location>
        <begin position="153"/>
        <end position="155"/>
    </location>
</feature>
<feature type="strand" evidence="28">
    <location>
        <begin position="158"/>
        <end position="162"/>
    </location>
</feature>
<feature type="helix" evidence="28">
    <location>
        <begin position="169"/>
        <end position="174"/>
    </location>
</feature>
<feature type="helix" evidence="28">
    <location>
        <begin position="177"/>
        <end position="179"/>
    </location>
</feature>
<feature type="strand" evidence="28">
    <location>
        <begin position="180"/>
        <end position="183"/>
    </location>
</feature>
<feature type="helix" evidence="28">
    <location>
        <begin position="188"/>
        <end position="204"/>
    </location>
</feature>
<feature type="strand" evidence="28">
    <location>
        <begin position="208"/>
        <end position="211"/>
    </location>
</feature>
<feature type="helix" evidence="28">
    <location>
        <begin position="214"/>
        <end position="216"/>
    </location>
</feature>
<feature type="helix" evidence="28">
    <location>
        <begin position="219"/>
        <end position="226"/>
    </location>
</feature>
<feature type="turn" evidence="28">
    <location>
        <begin position="234"/>
        <end position="236"/>
    </location>
</feature>
<feature type="strand" evidence="28">
    <location>
        <begin position="244"/>
        <end position="247"/>
    </location>
</feature>
<feature type="strand" evidence="28">
    <location>
        <begin position="253"/>
        <end position="256"/>
    </location>
</feature>
<feature type="helix" evidence="28">
    <location>
        <begin position="259"/>
        <end position="262"/>
    </location>
</feature>
<feature type="turn" evidence="28">
    <location>
        <begin position="263"/>
        <end position="265"/>
    </location>
</feature>
<feature type="strand" evidence="28">
    <location>
        <begin position="266"/>
        <end position="269"/>
    </location>
</feature>
<feature type="helix" evidence="28">
    <location>
        <begin position="271"/>
        <end position="282"/>
    </location>
</feature>
<feature type="helix" evidence="28">
    <location>
        <begin position="284"/>
        <end position="286"/>
    </location>
</feature>
<feature type="helix" evidence="28">
    <location>
        <begin position="289"/>
        <end position="294"/>
    </location>
</feature>
<feature type="helix" evidence="28">
    <location>
        <begin position="297"/>
        <end position="299"/>
    </location>
</feature>
<feature type="helix" evidence="28">
    <location>
        <begin position="304"/>
        <end position="306"/>
    </location>
</feature>
<feature type="strand" evidence="28">
    <location>
        <begin position="307"/>
        <end position="309"/>
    </location>
</feature>
<feature type="helix" evidence="28">
    <location>
        <begin position="316"/>
        <end position="318"/>
    </location>
</feature>
<feature type="strand" evidence="27">
    <location>
        <begin position="319"/>
        <end position="321"/>
    </location>
</feature>
<feature type="helix" evidence="28">
    <location>
        <begin position="324"/>
        <end position="326"/>
    </location>
</feature>
<feature type="helix" evidence="28">
    <location>
        <begin position="330"/>
        <end position="332"/>
    </location>
</feature>
<feature type="helix" evidence="28">
    <location>
        <begin position="333"/>
        <end position="345"/>
    </location>
</feature>
<feature type="strand" evidence="28">
    <location>
        <begin position="348"/>
        <end position="355"/>
    </location>
</feature>
<feature type="strand" evidence="25">
    <location>
        <begin position="363"/>
        <end position="366"/>
    </location>
</feature>
<feature type="turn" evidence="28">
    <location>
        <begin position="369"/>
        <end position="372"/>
    </location>
</feature>
<feature type="strand" evidence="28">
    <location>
        <begin position="375"/>
        <end position="378"/>
    </location>
</feature>
<feature type="helix" evidence="28">
    <location>
        <begin position="400"/>
        <end position="402"/>
    </location>
</feature>
<feature type="helix" evidence="28">
    <location>
        <begin position="404"/>
        <end position="415"/>
    </location>
</feature>
<feature type="turn" evidence="28">
    <location>
        <begin position="416"/>
        <end position="418"/>
    </location>
</feature>
<feature type="strand" evidence="28">
    <location>
        <begin position="421"/>
        <end position="426"/>
    </location>
</feature>
<feature type="strand" evidence="28">
    <location>
        <begin position="428"/>
        <end position="436"/>
    </location>
</feature>
<feature type="turn" evidence="28">
    <location>
        <begin position="437"/>
        <end position="439"/>
    </location>
</feature>
<feature type="strand" evidence="28">
    <location>
        <begin position="440"/>
        <end position="445"/>
    </location>
</feature>
<feature type="strand" evidence="28">
    <location>
        <begin position="447"/>
        <end position="449"/>
    </location>
</feature>
<feature type="strand" evidence="28">
    <location>
        <begin position="451"/>
        <end position="456"/>
    </location>
</feature>
<feature type="strand" evidence="28">
    <location>
        <begin position="461"/>
        <end position="465"/>
    </location>
</feature>
<feature type="turn" evidence="28">
    <location>
        <begin position="467"/>
        <end position="469"/>
    </location>
</feature>
<feature type="strand" evidence="28">
    <location>
        <begin position="476"/>
        <end position="479"/>
    </location>
</feature>
<feature type="strand" evidence="28">
    <location>
        <begin position="481"/>
        <end position="484"/>
    </location>
</feature>
<feature type="strand" evidence="28">
    <location>
        <begin position="488"/>
        <end position="494"/>
    </location>
</feature>
<feature type="strand" evidence="28">
    <location>
        <begin position="498"/>
        <end position="500"/>
    </location>
</feature>
<feature type="strand" evidence="28">
    <location>
        <begin position="502"/>
        <end position="506"/>
    </location>
</feature>
<feature type="helix" evidence="28">
    <location>
        <begin position="507"/>
        <end position="509"/>
    </location>
</feature>
<organism>
    <name type="scientific">Homo sapiens</name>
    <name type="common">Human</name>
    <dbReference type="NCBI Taxonomy" id="9606"/>
    <lineage>
        <taxon>Eukaryota</taxon>
        <taxon>Metazoa</taxon>
        <taxon>Chordata</taxon>
        <taxon>Craniata</taxon>
        <taxon>Vertebrata</taxon>
        <taxon>Euteleostomi</taxon>
        <taxon>Mammalia</taxon>
        <taxon>Eutheria</taxon>
        <taxon>Euarchontoglires</taxon>
        <taxon>Primates</taxon>
        <taxon>Haplorrhini</taxon>
        <taxon>Catarrhini</taxon>
        <taxon>Hominidae</taxon>
        <taxon>Homo</taxon>
    </lineage>
</organism>
<accession>P04746</accession>
<accession>B9EJG1</accession>
<accession>Q9UBH3</accession>
<proteinExistence type="evidence at protein level"/>
<name>AMYP_HUMAN</name>
<evidence type="ECO:0000269" key="1">
    <source>
    </source>
</evidence>
<evidence type="ECO:0000269" key="2">
    <source>
    </source>
</evidence>
<evidence type="ECO:0000269" key="3">
    <source>
    </source>
</evidence>
<evidence type="ECO:0000269" key="4">
    <source>
    </source>
</evidence>
<evidence type="ECO:0000269" key="5">
    <source>
    </source>
</evidence>
<evidence type="ECO:0000269" key="6">
    <source>
    </source>
</evidence>
<evidence type="ECO:0000303" key="7">
    <source>
    </source>
</evidence>
<evidence type="ECO:0000305" key="8"/>
<evidence type="ECO:0000305" key="9">
    <source>
    </source>
</evidence>
<evidence type="ECO:0000305" key="10">
    <source>
    </source>
</evidence>
<evidence type="ECO:0000305" key="11">
    <source>
    </source>
</evidence>
<evidence type="ECO:0000305" key="12">
    <source>
    </source>
</evidence>
<evidence type="ECO:0000312" key="13">
    <source>
        <dbReference type="PDB" id="1BSI"/>
    </source>
</evidence>
<evidence type="ECO:0000312" key="14">
    <source>
        <dbReference type="PDB" id="1CPU"/>
    </source>
</evidence>
<evidence type="ECO:0000312" key="15">
    <source>
        <dbReference type="PDB" id="1HNY"/>
    </source>
</evidence>
<evidence type="ECO:0000312" key="16">
    <source>
        <dbReference type="PDB" id="1KB3"/>
    </source>
</evidence>
<evidence type="ECO:0000312" key="17">
    <source>
        <dbReference type="PDB" id="1KBB"/>
    </source>
</evidence>
<evidence type="ECO:0000312" key="18">
    <source>
        <dbReference type="PDB" id="1KBK"/>
    </source>
</evidence>
<evidence type="ECO:0000312" key="19">
    <source>
        <dbReference type="PDB" id="1KGU"/>
    </source>
</evidence>
<evidence type="ECO:0000312" key="20">
    <source>
        <dbReference type="PDB" id="1KGW"/>
    </source>
</evidence>
<evidence type="ECO:0000312" key="21">
    <source>
        <dbReference type="PDB" id="1KGX"/>
    </source>
</evidence>
<evidence type="ECO:0000312" key="22">
    <source>
        <dbReference type="PDB" id="2CPU"/>
    </source>
</evidence>
<evidence type="ECO:0000312" key="23">
    <source>
        <dbReference type="PDB" id="3CPU"/>
    </source>
</evidence>
<evidence type="ECO:0007744" key="24">
    <source>
        <dbReference type="PDB" id="1HNY"/>
    </source>
</evidence>
<evidence type="ECO:0007829" key="25">
    <source>
        <dbReference type="PDB" id="1KBK"/>
    </source>
</evidence>
<evidence type="ECO:0007829" key="26">
    <source>
        <dbReference type="PDB" id="1KGW"/>
    </source>
</evidence>
<evidence type="ECO:0007829" key="27">
    <source>
        <dbReference type="PDB" id="4X9Y"/>
    </source>
</evidence>
<evidence type="ECO:0007829" key="28">
    <source>
        <dbReference type="PDB" id="5U3A"/>
    </source>
</evidence>
<reference key="1">
    <citation type="journal article" date="1984" name="Gene">
        <title>Corrected sequences of cDNAs for human salivary and pancreatic alpha-amylases.</title>
        <authorList>
            <person name="Nakamura Y."/>
            <person name="Ogawa M."/>
            <person name="Nishide T."/>
            <person name="Emi M."/>
            <person name="Kosaki G."/>
            <person name="Himeno S."/>
            <person name="Matsubara K."/>
        </authorList>
    </citation>
    <scope>NUCLEOTIDE SEQUENCE [GENOMIC DNA]</scope>
</reference>
<reference key="2">
    <citation type="journal article" date="1986" name="Gene">
        <authorList>
            <person name="Nakamura Y."/>
            <person name="Ogawa M."/>
            <person name="Nishide T."/>
            <person name="Emi M."/>
            <person name="Kosaki G."/>
            <person name="Himeno S."/>
            <person name="Matsubara K."/>
        </authorList>
    </citation>
    <scope>ERRATUM OF PUBMED:6610603</scope>
    <scope>SEQUENCE REVISION</scope>
</reference>
<reference key="3">
    <citation type="journal article" date="1987" name="Gene">
        <title>Primary structure of human pancreatic alpha-amylase gene: its comparison with human salivary alpha-amylase gene.</title>
        <authorList>
            <person name="Horii A."/>
            <person name="Emi M."/>
            <person name="Tomita N."/>
            <person name="Nishide T."/>
            <person name="Ogawa M."/>
            <person name="Mori T."/>
            <person name="Matsubara K."/>
        </authorList>
    </citation>
    <scope>NUCLEOTIDE SEQUENCE [GENOMIC DNA]</scope>
    <source>
        <tissue>Pancreas</tissue>
    </source>
</reference>
<reference key="4">
    <citation type="journal article" date="1984" name="Mol. Biol. Med.">
        <title>A complementary DNA sequence that predicts a human pancreatic amylase primary structure consistent with the electrophoretic mobility of the common isozyme, Amy2 A.</title>
        <authorList>
            <person name="Wise R.J."/>
            <person name="Karn R.C."/>
            <person name="Larsen S.H."/>
            <person name="Hodes M.E."/>
            <person name="Gardell S.J."/>
            <person name="Rutter W.J."/>
        </authorList>
    </citation>
    <scope>NUCLEOTIDE SEQUENCE [GENOMIC DNA]</scope>
    <source>
        <tissue>Pancreas</tissue>
    </source>
</reference>
<reference key="5">
    <citation type="journal article" date="2004" name="Genome Res.">
        <title>The status, quality, and expansion of the NIH full-length cDNA project: the Mammalian Gene Collection (MGC).</title>
        <authorList>
            <consortium name="The MGC Project Team"/>
        </authorList>
    </citation>
    <scope>NUCLEOTIDE SEQUENCE [LARGE SCALE MRNA] (ISOFORMS 1 AND 2)</scope>
    <source>
        <tissue>Pancreas</tissue>
    </source>
</reference>
<reference key="6">
    <citation type="journal article" date="1988" name="Nucleic Acids Res.">
        <title>Human pancreatic amylase is encoded by two different genes.</title>
        <authorList>
            <person name="Groot P.C."/>
            <person name="Bleeker M.J."/>
            <person name="Pronk J.C."/>
            <person name="Arwert F."/>
            <person name="Mager W.H."/>
            <person name="Planta R.J."/>
            <person name="Eriksson A.W."/>
            <person name="Frants R.R."/>
        </authorList>
    </citation>
    <scope>NUCLEOTIDE SEQUENCE [GENOMIC DNA] OF 1-56</scope>
</reference>
<reference key="7">
    <citation type="journal article" date="1988" name="Mol. Cell. Biol.">
        <title>Concerted evolution of human amylase genes.</title>
        <authorList>
            <person name="Gumucio D.L."/>
            <person name="Wiebauer K."/>
            <person name="Caldwell R.M."/>
            <person name="Samuelson L.C."/>
            <person name="Meisler M.H."/>
        </authorList>
    </citation>
    <scope>NUCLEOTIDE SEQUENCE [GENOMIC DNA] OF 1-56</scope>
</reference>
<reference key="8">
    <citation type="journal article" date="2016" name="ACS Cent. Sci.">
        <title>Potent human alpha-amylase inhibition by the beta-defensin-like protein helianthamide.</title>
        <authorList>
            <person name="Tysoe C."/>
            <person name="Williams L.K."/>
            <person name="Keyzers R."/>
            <person name="Nguyen N.T."/>
            <person name="Tarling C."/>
            <person name="Wicki J."/>
            <person name="Goddard-Borger E.D."/>
            <person name="Aguda A.H."/>
            <person name="Perry S."/>
            <person name="Foster L.J."/>
            <person name="Andersen R.J."/>
            <person name="Brayer G.D."/>
            <person name="Withers S.G."/>
        </authorList>
    </citation>
    <scope>SUBUNIT</scope>
    <scope>INTERACTION WITH THE SEA ANEMONE INHIBITOR HELIANTHAMIDE</scope>
</reference>
<reference key="9">
    <citation type="journal article" date="1994" name="Biochemistry">
        <title>The active center of a mammalian alpha-amylase. Structure of the complex of a pancreatic alpha-amylase with a carbohydrate inhibitor refined to 2.2-A resolution.</title>
        <authorList>
            <person name="Qian M."/>
            <person name="Haser R."/>
            <person name="Buisson G."/>
            <person name="Duee E."/>
            <person name="Payan F."/>
        </authorList>
    </citation>
    <scope>X-RAY CRYSTALLOGRAPHY (2.2 ANGSTROMS)</scope>
</reference>
<reference evidence="15" key="10">
    <citation type="journal article" date="1995" name="Protein Sci.">
        <title>The structure of human pancreatic alpha-amylase at 1.8-A resolution and comparisons with related enzymes.</title>
        <authorList>
            <person name="Brayer G.D."/>
            <person name="Luo Y."/>
            <person name="Withers S.G."/>
        </authorList>
    </citation>
    <scope>X-RAY CRYSTALLOGRAPHY (1.8 ANGSTROMS) OF 17-511 IN COMPLEX WITH CALCIUM AND CHLORIDE</scope>
    <scope>COFACTOR</scope>
    <scope>DISULFIDE BONDS</scope>
    <scope>PYROGLUTAMATE FORMATION AT GLN-16</scope>
    <scope>TISSUE SPECIFICITY</scope>
</reference>
<reference evidence="13" key="11">
    <citation type="journal article" date="1999" name="Protein Sci.">
        <title>Cloning, mutagenesis, and structural analysis of human pancreatic alpha-amylase expressed in Pichia pastoris.</title>
        <authorList>
            <person name="Rydberg E.H."/>
            <person name="Sidhu G."/>
            <person name="Vo H.C."/>
            <person name="Hewitt J."/>
            <person name="Cote H.C.F."/>
            <person name="Wang Y."/>
            <person name="Numao S."/>
            <person name="MacGillivray R.T.A."/>
            <person name="Overall C.M."/>
            <person name="Brayer G.D."/>
            <person name="Withers S.G."/>
        </authorList>
    </citation>
    <scope>X-RAY CRYSTALLOGRAPHY (2.00 ANGSTROMS) OF 17-511 IN COMPLEX WITH CALCIUM AND CHLORIDE</scope>
    <scope>CATALYTIC ACTIVITY</scope>
    <scope>COFACTOR</scope>
    <scope>DISULFIDE BONDS</scope>
    <scope>GLYCOSYLATION AT ASN-476</scope>
    <scope>MUTAGENESIS OF ASP-212</scope>
    <scope>ACTIVE SITE</scope>
</reference>
<reference evidence="14 22 23" key="12">
    <citation type="journal article" date="2000" name="Biochemistry">
        <title>Subsite mapping of the human pancreatic alpha-amylase active site through structural, kinetic, and mutagenesis techniques.</title>
        <authorList>
            <person name="Brayer G.D."/>
            <person name="Sidhu G."/>
            <person name="Maurus R."/>
            <person name="Rydberg E.H."/>
            <person name="Braun C."/>
            <person name="Wang Y."/>
            <person name="Nguyen N.T."/>
            <person name="Overall C.M."/>
            <person name="Withers S.G."/>
        </authorList>
    </citation>
    <scope>X-RAY CRYSTALLOGRAPHY (2.00 ANGSTROMS) OF 17-511 IN COMPLEX WITH SUBSTRATE ANALOGS; CALCIUM AND CHLORIDE</scope>
    <scope>CATALYTIC ACTIVITY</scope>
    <scope>MUTAGENESIS OF ASP-212; GLU-248 AND ASP-315</scope>
    <scope>ACTIVE SITE</scope>
    <scope>DISULFIDE BONDS</scope>
    <scope>GLYCOSYLATION AT ASN-476</scope>
    <scope>COFACTOR</scope>
</reference>
<reference evidence="16 19 20 21" key="13">
    <citation type="journal article" date="2002" name="Biochemistry">
        <title>Probing the role of the chloride ion in the mechanism of human pancreatic alpha-amylase.</title>
        <authorList>
            <person name="Numao S."/>
            <person name="Maurus R."/>
            <person name="Sidhu G."/>
            <person name="Wang Y."/>
            <person name="Overall C.M."/>
            <person name="Brayer G.D."/>
            <person name="Withers S.G."/>
        </authorList>
    </citation>
    <scope>X-RAY CRYSTALLOGRAPHY (2.00 ANGSTROMS) OF 16-511 IN COMPLEX WITH CALCIUM</scope>
    <scope>MUTAGENESIS OF ARG-210; ASN-313 AND ARG-352</scope>
    <scope>DISULFIDE BONDS</scope>
    <scope>PYROGLUTAMATE FORMATION AT GLN-16</scope>
    <scope>GLYCOSYLATION AT ASN-476</scope>
    <scope>COFACTOR</scope>
    <scope>CATALYTIC ACTIVITY</scope>
    <scope>ACTIVE SITE</scope>
</reference>
<reference evidence="17 18" key="14">
    <citation type="journal article" date="2002" name="Biochemistry">
        <title>Mechanistic analyses of catalysis in human pancreatic alpha-amylase: detailed kinetic and structural studies of mutants of three conserved carboxylic acids.</title>
        <authorList>
            <person name="Rydberg E.H."/>
            <person name="Li C."/>
            <person name="Maurus R."/>
            <person name="Overall C.M."/>
            <person name="Brayer G.D."/>
            <person name="Withers S.G."/>
        </authorList>
    </citation>
    <scope>X-RAY CRYSTALLOGRAPHY (1.9 ANGSTROMS) OF 16-511 IN COMPLEX WITH CALCIUM AND CHLORIDE</scope>
    <scope>MUTAGENESIS OF ASP-212; GLU-248 AND ASP-315</scope>
    <scope>DISULFIDE BONDS</scope>
    <scope>PYROGLUTAMATE FORMATION AT GLN-16</scope>
    <scope>COFACTOR</scope>
    <scope>ACTIVE SITE</scope>
</reference>
<keyword id="KW-0002">3D-structure</keyword>
<keyword id="KW-0025">Alternative splicing</keyword>
<keyword id="KW-0106">Calcium</keyword>
<keyword id="KW-0119">Carbohydrate metabolism</keyword>
<keyword id="KW-0868">Chloride</keyword>
<keyword id="KW-1015">Disulfide bond</keyword>
<keyword id="KW-0325">Glycoprotein</keyword>
<keyword id="KW-0326">Glycosidase</keyword>
<keyword id="KW-0378">Hydrolase</keyword>
<keyword id="KW-0479">Metal-binding</keyword>
<keyword id="KW-1267">Proteomics identification</keyword>
<keyword id="KW-0873">Pyrrolidone carboxylic acid</keyword>
<keyword id="KW-1185">Reference proteome</keyword>
<keyword id="KW-0964">Secreted</keyword>
<keyword id="KW-0732">Signal</keyword>
<protein>
    <recommendedName>
        <fullName>Pancreatic alpha-amylase</fullName>
        <shortName>PA</shortName>
        <ecNumber evidence="1 2 3 4">3.2.1.1</ecNumber>
    </recommendedName>
    <alternativeName>
        <fullName>1,4-alpha-D-glucan glucanohydrolase</fullName>
    </alternativeName>
</protein>
<gene>
    <name type="primary">AMY2A</name>
</gene>
<dbReference type="EC" id="3.2.1.1" evidence="1 2 3 4"/>
<dbReference type="EMBL" id="M18785">
    <property type="protein sequence ID" value="AAA52280.1"/>
    <property type="molecule type" value="Genomic_DNA"/>
</dbReference>
<dbReference type="EMBL" id="M18714">
    <property type="protein sequence ID" value="AAA52280.1"/>
    <property type="status" value="JOINED"/>
    <property type="molecule type" value="Genomic_DNA"/>
</dbReference>
<dbReference type="EMBL" id="M18716">
    <property type="protein sequence ID" value="AAA52280.1"/>
    <property type="status" value="JOINED"/>
    <property type="molecule type" value="Genomic_DNA"/>
</dbReference>
<dbReference type="EMBL" id="M18718">
    <property type="protein sequence ID" value="AAA52280.1"/>
    <property type="status" value="JOINED"/>
    <property type="molecule type" value="Genomic_DNA"/>
</dbReference>
<dbReference type="EMBL" id="M18720">
    <property type="protein sequence ID" value="AAA52280.1"/>
    <property type="status" value="JOINED"/>
    <property type="molecule type" value="Genomic_DNA"/>
</dbReference>
<dbReference type="EMBL" id="M18722">
    <property type="protein sequence ID" value="AAA52280.1"/>
    <property type="status" value="JOINED"/>
    <property type="molecule type" value="Genomic_DNA"/>
</dbReference>
<dbReference type="EMBL" id="M18724">
    <property type="protein sequence ID" value="AAA52280.1"/>
    <property type="status" value="JOINED"/>
    <property type="molecule type" value="Genomic_DNA"/>
</dbReference>
<dbReference type="EMBL" id="M18726">
    <property type="protein sequence ID" value="AAA52280.1"/>
    <property type="status" value="JOINED"/>
    <property type="molecule type" value="Genomic_DNA"/>
</dbReference>
<dbReference type="EMBL" id="M18783">
    <property type="protein sequence ID" value="AAA52280.1"/>
    <property type="status" value="JOINED"/>
    <property type="molecule type" value="Genomic_DNA"/>
</dbReference>
<dbReference type="EMBL" id="M28443">
    <property type="protein sequence ID" value="AAA51724.1"/>
    <property type="molecule type" value="mRNA"/>
</dbReference>
<dbReference type="EMBL" id="BC007060">
    <property type="protein sequence ID" value="AAH07060.1"/>
    <property type="molecule type" value="mRNA"/>
</dbReference>
<dbReference type="EMBL" id="BC146997">
    <property type="protein sequence ID" value="AAI46998.1"/>
    <property type="molecule type" value="mRNA"/>
</dbReference>
<dbReference type="EMBL" id="M18669">
    <property type="protein sequence ID" value="AAA51723.1"/>
    <property type="molecule type" value="Genomic_DNA"/>
</dbReference>
<dbReference type="EMBL" id="X07056">
    <property type="protein sequence ID" value="CAA30099.1"/>
    <property type="molecule type" value="Genomic_DNA"/>
</dbReference>
<dbReference type="CCDS" id="CCDS783.1">
    <molecule id="P04746-1"/>
</dbReference>
<dbReference type="PIR" id="A29614">
    <property type="entry name" value="ALHUP"/>
</dbReference>
<dbReference type="RefSeq" id="NP_000690.1">
    <molecule id="P04746-1"/>
    <property type="nucleotide sequence ID" value="NM_000699.4"/>
</dbReference>
<dbReference type="RefSeq" id="XP_047274041.1">
    <molecule id="P04746-1"/>
    <property type="nucleotide sequence ID" value="XM_047418085.1"/>
</dbReference>
<dbReference type="PDB" id="1B2Y">
    <property type="method" value="X-ray"/>
    <property type="resolution" value="3.20 A"/>
    <property type="chains" value="A=16-511"/>
</dbReference>
<dbReference type="PDB" id="1BSI">
    <property type="method" value="X-ray"/>
    <property type="resolution" value="2.00 A"/>
    <property type="chains" value="A=17-511"/>
</dbReference>
<dbReference type="PDB" id="1CPU">
    <property type="method" value="X-ray"/>
    <property type="resolution" value="2.00 A"/>
    <property type="chains" value="A=16-511"/>
</dbReference>
<dbReference type="PDB" id="1HNY">
    <property type="method" value="X-ray"/>
    <property type="resolution" value="1.80 A"/>
    <property type="chains" value="A=17-511"/>
</dbReference>
<dbReference type="PDB" id="1KB3">
    <property type="method" value="X-ray"/>
    <property type="resolution" value="2.10 A"/>
    <property type="chains" value="A=16-511"/>
</dbReference>
<dbReference type="PDB" id="1KBB">
    <property type="method" value="X-ray"/>
    <property type="resolution" value="1.90 A"/>
    <property type="chains" value="A=16-511"/>
</dbReference>
<dbReference type="PDB" id="1KBK">
    <property type="method" value="X-ray"/>
    <property type="resolution" value="1.90 A"/>
    <property type="chains" value="A=16-511"/>
</dbReference>
<dbReference type="PDB" id="1KGU">
    <property type="method" value="X-ray"/>
    <property type="resolution" value="2.00 A"/>
    <property type="chains" value="A=16-511"/>
</dbReference>
<dbReference type="PDB" id="1KGW">
    <property type="method" value="X-ray"/>
    <property type="resolution" value="2.10 A"/>
    <property type="chains" value="A=16-511"/>
</dbReference>
<dbReference type="PDB" id="1KGX">
    <property type="method" value="X-ray"/>
    <property type="resolution" value="2.00 A"/>
    <property type="chains" value="A=16-511"/>
</dbReference>
<dbReference type="PDB" id="1U2Y">
    <property type="method" value="X-ray"/>
    <property type="resolution" value="1.95 A"/>
    <property type="chains" value="A=16-511"/>
</dbReference>
<dbReference type="PDB" id="1U30">
    <property type="method" value="X-ray"/>
    <property type="resolution" value="1.90 A"/>
    <property type="chains" value="A=16-511"/>
</dbReference>
<dbReference type="PDB" id="1U33">
    <property type="method" value="X-ray"/>
    <property type="resolution" value="1.95 A"/>
    <property type="chains" value="A=16-511"/>
</dbReference>
<dbReference type="PDB" id="1XCW">
    <property type="method" value="X-ray"/>
    <property type="resolution" value="2.00 A"/>
    <property type="chains" value="A=16-511"/>
</dbReference>
<dbReference type="PDB" id="1XCX">
    <property type="method" value="X-ray"/>
    <property type="resolution" value="1.90 A"/>
    <property type="chains" value="A=16-511"/>
</dbReference>
<dbReference type="PDB" id="1XD0">
    <property type="method" value="X-ray"/>
    <property type="resolution" value="2.00 A"/>
    <property type="chains" value="A=16-511"/>
</dbReference>
<dbReference type="PDB" id="1XD1">
    <property type="method" value="X-ray"/>
    <property type="resolution" value="2.20 A"/>
    <property type="chains" value="A=16-511"/>
</dbReference>
<dbReference type="PDB" id="1XGZ">
    <property type="method" value="X-ray"/>
    <property type="resolution" value="2.00 A"/>
    <property type="chains" value="A=16-511"/>
</dbReference>
<dbReference type="PDB" id="1XH0">
    <property type="method" value="X-ray"/>
    <property type="resolution" value="2.00 A"/>
    <property type="chains" value="A=16-511"/>
</dbReference>
<dbReference type="PDB" id="1XH1">
    <property type="method" value="X-ray"/>
    <property type="resolution" value="2.03 A"/>
    <property type="chains" value="A=16-511"/>
</dbReference>
<dbReference type="PDB" id="1XH2">
    <property type="method" value="X-ray"/>
    <property type="resolution" value="2.20 A"/>
    <property type="chains" value="A=16-511"/>
</dbReference>
<dbReference type="PDB" id="2CPU">
    <property type="method" value="X-ray"/>
    <property type="resolution" value="2.00 A"/>
    <property type="chains" value="A=17-511"/>
</dbReference>
<dbReference type="PDB" id="2QMK">
    <property type="method" value="X-ray"/>
    <property type="resolution" value="2.30 A"/>
    <property type="chains" value="A=16-511"/>
</dbReference>
<dbReference type="PDB" id="2QV4">
    <property type="method" value="X-ray"/>
    <property type="resolution" value="1.97 A"/>
    <property type="chains" value="A=16-511"/>
</dbReference>
<dbReference type="PDB" id="3BAI">
    <property type="method" value="X-ray"/>
    <property type="resolution" value="1.90 A"/>
    <property type="chains" value="A=16-511"/>
</dbReference>
<dbReference type="PDB" id="3BAJ">
    <property type="method" value="X-ray"/>
    <property type="resolution" value="2.10 A"/>
    <property type="chains" value="A=16-511"/>
</dbReference>
<dbReference type="PDB" id="3BAK">
    <property type="method" value="X-ray"/>
    <property type="resolution" value="1.90 A"/>
    <property type="chains" value="A=16-511"/>
</dbReference>
<dbReference type="PDB" id="3BAW">
    <property type="method" value="X-ray"/>
    <property type="resolution" value="2.00 A"/>
    <property type="chains" value="A=16-511"/>
</dbReference>
<dbReference type="PDB" id="3BAX">
    <property type="method" value="X-ray"/>
    <property type="resolution" value="1.90 A"/>
    <property type="chains" value="A=16-511"/>
</dbReference>
<dbReference type="PDB" id="3BAY">
    <property type="method" value="X-ray"/>
    <property type="resolution" value="1.99 A"/>
    <property type="chains" value="A=16-511"/>
</dbReference>
<dbReference type="PDB" id="3CPU">
    <property type="method" value="X-ray"/>
    <property type="resolution" value="2.00 A"/>
    <property type="chains" value="A=17-511"/>
</dbReference>
<dbReference type="PDB" id="3IJ7">
    <property type="method" value="X-ray"/>
    <property type="resolution" value="2.00 A"/>
    <property type="chains" value="A=17-511"/>
</dbReference>
<dbReference type="PDB" id="3IJ8">
    <property type="method" value="X-ray"/>
    <property type="resolution" value="1.43 A"/>
    <property type="chains" value="A=17-511"/>
</dbReference>
<dbReference type="PDB" id="3IJ9">
    <property type="method" value="X-ray"/>
    <property type="resolution" value="1.85 A"/>
    <property type="chains" value="A=17-511"/>
</dbReference>
<dbReference type="PDB" id="3OLD">
    <property type="method" value="X-ray"/>
    <property type="resolution" value="2.00 A"/>
    <property type="chains" value="A=16-511"/>
</dbReference>
<dbReference type="PDB" id="3OLE">
    <property type="method" value="X-ray"/>
    <property type="resolution" value="1.55 A"/>
    <property type="chains" value="A=16-511"/>
</dbReference>
<dbReference type="PDB" id="3OLG">
    <property type="method" value="X-ray"/>
    <property type="resolution" value="2.30 A"/>
    <property type="chains" value="A=16-511"/>
</dbReference>
<dbReference type="PDB" id="3OLI">
    <property type="method" value="X-ray"/>
    <property type="resolution" value="1.50 A"/>
    <property type="chains" value="A=16-511"/>
</dbReference>
<dbReference type="PDB" id="4GQQ">
    <property type="method" value="X-ray"/>
    <property type="resolution" value="1.35 A"/>
    <property type="chains" value="A=17-511"/>
</dbReference>
<dbReference type="PDB" id="4GQR">
    <property type="method" value="X-ray"/>
    <property type="resolution" value="1.20 A"/>
    <property type="chains" value="A=17-511"/>
</dbReference>
<dbReference type="PDB" id="4W93">
    <property type="method" value="X-ray"/>
    <property type="resolution" value="1.35 A"/>
    <property type="chains" value="A=17-511"/>
</dbReference>
<dbReference type="PDB" id="4X9Y">
    <property type="method" value="X-ray"/>
    <property type="resolution" value="1.07 A"/>
    <property type="chains" value="A=17-511"/>
</dbReference>
<dbReference type="PDB" id="5E0F">
    <property type="method" value="X-ray"/>
    <property type="resolution" value="1.40 A"/>
    <property type="chains" value="A=17-511"/>
</dbReference>
<dbReference type="PDB" id="5EMY">
    <property type="method" value="X-ray"/>
    <property type="resolution" value="1.23 A"/>
    <property type="chains" value="A=17-511"/>
</dbReference>
<dbReference type="PDB" id="5KEZ">
    <property type="method" value="X-ray"/>
    <property type="resolution" value="1.83 A"/>
    <property type="chains" value="A=17-511"/>
</dbReference>
<dbReference type="PDB" id="5TD4">
    <property type="method" value="X-ray"/>
    <property type="resolution" value="2.30 A"/>
    <property type="chains" value="A=17-511"/>
</dbReference>
<dbReference type="PDB" id="5U3A">
    <property type="method" value="X-ray"/>
    <property type="resolution" value="0.95 A"/>
    <property type="chains" value="A=16-511"/>
</dbReference>
<dbReference type="PDB" id="5VA9">
    <property type="method" value="X-ray"/>
    <property type="resolution" value="2.55 A"/>
    <property type="chains" value="A/B=16-511"/>
</dbReference>
<dbReference type="PDB" id="6OBX">
    <property type="method" value="X-ray"/>
    <property type="resolution" value="1.30 A"/>
    <property type="chains" value="A=17-511"/>
</dbReference>
<dbReference type="PDB" id="6OCN">
    <property type="method" value="X-ray"/>
    <property type="resolution" value="1.15 A"/>
    <property type="chains" value="A=16-511"/>
</dbReference>
<dbReference type="PDB" id="6Z8L">
    <property type="method" value="X-ray"/>
    <property type="resolution" value="1.40 A"/>
    <property type="chains" value="A=16-511"/>
</dbReference>
<dbReference type="PDBsum" id="1B2Y"/>
<dbReference type="PDBsum" id="1BSI"/>
<dbReference type="PDBsum" id="1CPU"/>
<dbReference type="PDBsum" id="1HNY"/>
<dbReference type="PDBsum" id="1KB3"/>
<dbReference type="PDBsum" id="1KBB"/>
<dbReference type="PDBsum" id="1KBK"/>
<dbReference type="PDBsum" id="1KGU"/>
<dbReference type="PDBsum" id="1KGW"/>
<dbReference type="PDBsum" id="1KGX"/>
<dbReference type="PDBsum" id="1U2Y"/>
<dbReference type="PDBsum" id="1U30"/>
<dbReference type="PDBsum" id="1U33"/>
<dbReference type="PDBsum" id="1XCW"/>
<dbReference type="PDBsum" id="1XCX"/>
<dbReference type="PDBsum" id="1XD0"/>
<dbReference type="PDBsum" id="1XD1"/>
<dbReference type="PDBsum" id="1XGZ"/>
<dbReference type="PDBsum" id="1XH0"/>
<dbReference type="PDBsum" id="1XH1"/>
<dbReference type="PDBsum" id="1XH2"/>
<dbReference type="PDBsum" id="2CPU"/>
<dbReference type="PDBsum" id="2QMK"/>
<dbReference type="PDBsum" id="2QV4"/>
<dbReference type="PDBsum" id="3BAI"/>
<dbReference type="PDBsum" id="3BAJ"/>
<dbReference type="PDBsum" id="3BAK"/>
<dbReference type="PDBsum" id="3BAW"/>
<dbReference type="PDBsum" id="3BAX"/>
<dbReference type="PDBsum" id="3BAY"/>
<dbReference type="PDBsum" id="3CPU"/>
<dbReference type="PDBsum" id="3IJ7"/>
<dbReference type="PDBsum" id="3IJ8"/>
<dbReference type="PDBsum" id="3IJ9"/>
<dbReference type="PDBsum" id="3OLD"/>
<dbReference type="PDBsum" id="3OLE"/>
<dbReference type="PDBsum" id="3OLG"/>
<dbReference type="PDBsum" id="3OLI"/>
<dbReference type="PDBsum" id="4GQQ"/>
<dbReference type="PDBsum" id="4GQR"/>
<dbReference type="PDBsum" id="4W93"/>
<dbReference type="PDBsum" id="4X9Y"/>
<dbReference type="PDBsum" id="5E0F"/>
<dbReference type="PDBsum" id="5EMY"/>
<dbReference type="PDBsum" id="5KEZ"/>
<dbReference type="PDBsum" id="5TD4"/>
<dbReference type="PDBsum" id="5U3A"/>
<dbReference type="PDBsum" id="5VA9"/>
<dbReference type="PDBsum" id="6OBX"/>
<dbReference type="PDBsum" id="6OCN"/>
<dbReference type="PDBsum" id="6Z8L"/>
<dbReference type="SMR" id="P04746"/>
<dbReference type="BioGRID" id="106776">
    <property type="interactions" value="21"/>
</dbReference>
<dbReference type="FunCoup" id="P04746">
    <property type="interactions" value="124"/>
</dbReference>
<dbReference type="IntAct" id="P04746">
    <property type="interactions" value="16"/>
</dbReference>
<dbReference type="STRING" id="9606.ENSP00000481450"/>
<dbReference type="BindingDB" id="P04746"/>
<dbReference type="ChEMBL" id="CHEMBL2045"/>
<dbReference type="DrugBank" id="DB03439">
    <property type="generic name" value="4,6-dideoxy-4-amino-alpha-D-glucose"/>
</dbReference>
<dbReference type="DrugBank" id="DB03495">
    <property type="generic name" value="4,6-Dideoxy-4-{[4,5,6-Trihydroxy-3-(Hydroxymethyl)Cyclohex-2-En-1-Yl]Amino}-Alpha-D-Lyxo-Hexopyranosyl-(1-&gt;4)-Alpha-D-Threo-Hexopyranosyl-(1-&gt;6)-Alpha-L-Threo-Hexopyranose"/>
</dbReference>
<dbReference type="DrugBank" id="DB04618">
    <property type="generic name" value="4,6-DIDEOXY-4-{[4-[(4-O-HEXOPYRANOSYLHEXOPYRANOSYL)OXY]-5,6-DIHYDROXY-3-(HYDROXYMETHYL)CYCLOHEX-2-EN-1-YL]AMINO}HEXOPYRANOSYL-(1-&gt;4)HEXOPYRANOSYL-(1-&gt;4)HEXOPYRANOSE"/>
</dbReference>
<dbReference type="DrugBank" id="DB02889">
    <property type="generic name" value="4-O-(4,6-Dideoxy-4-{[4,5,6-Trihydroxy-3-(Hydroxymethyl)Cyclohex-2-En-1-Yl]Amino}-Beta-D-Lyxo-Hexopyranosyl)-Alpha-D-Erythro-Hexopyranose"/>
</dbReference>
<dbReference type="DrugBank" id="DB04453">
    <property type="generic name" value="4-O-(4,6-Dideoxy-4-{[4-[(4-O-Hexopyranosylhexopyranosyl)Oxy]-5,6-Dihydroxy-3-(Hydroxymethyl)Cyclohex-2-En-1-Yl]Amino}Hexopyranosyl)Hexopyranose"/>
</dbReference>
<dbReference type="DrugBank" id="DB03092">
    <property type="generic name" value="5-Hydroxymethyl-Chonduritol"/>
</dbReference>
<dbReference type="DrugBank" id="DB00284">
    <property type="generic name" value="Acarbose"/>
</dbReference>
<dbReference type="DrugBank" id="DB03971">
    <property type="generic name" value="Acarbose Derived Hexasaccharide"/>
</dbReference>
<dbReference type="DrugBank" id="DB03773">
    <property type="generic name" value="alpha-D-quinovopyranose"/>
</dbReference>
<dbReference type="DrugBank" id="DB02379">
    <property type="generic name" value="Beta-D-Glucose"/>
</dbReference>
<dbReference type="DrugBank" id="DB00702">
    <property type="generic name" value="Icodextrin"/>
</dbReference>
<dbReference type="DrugBank" id="DB01922">
    <property type="generic name" value="Maltosyl-Alpha (1,4)-D-Gluconhydroximo-1,5-Lactam"/>
</dbReference>
<dbReference type="DrugBank" id="DB00491">
    <property type="generic name" value="Miglitol"/>
</dbReference>
<dbReference type="DrugBank" id="DB02218">
    <property type="generic name" value="N-[4-hydroxymethyl-cyclohexan-6-yl-1,2,3-triol]-4,6-dideoxy-4-aminoglucopyranoside"/>
</dbReference>
<dbReference type="DrugBank" id="DB03088">
    <property type="generic name" value="Pidolic acid"/>
</dbReference>
<dbReference type="DrugCentral" id="P04746"/>
<dbReference type="CAZy" id="GH13">
    <property type="family name" value="Glycoside Hydrolase Family 13"/>
</dbReference>
<dbReference type="GlyCosmos" id="P04746">
    <property type="glycosylation" value="1 site, No reported glycans"/>
</dbReference>
<dbReference type="GlyGen" id="P04746">
    <property type="glycosylation" value="3 sites, 1 O-linked glycan (1 site)"/>
</dbReference>
<dbReference type="iPTMnet" id="P04746"/>
<dbReference type="PhosphoSitePlus" id="P04746"/>
<dbReference type="BioMuta" id="AMY2A"/>
<dbReference type="DMDM" id="113803"/>
<dbReference type="jPOST" id="P04746"/>
<dbReference type="MassIVE" id="P04746"/>
<dbReference type="PaxDb" id="9606-ENSP00000481450"/>
<dbReference type="PeptideAtlas" id="P04746"/>
<dbReference type="PRIDE" id="P04746"/>
<dbReference type="ProteomicsDB" id="51742">
    <molecule id="P04746-1"/>
</dbReference>
<dbReference type="Pumba" id="P04746"/>
<dbReference type="Antibodypedia" id="34943">
    <property type="antibodies" value="417 antibodies from 31 providers"/>
</dbReference>
<dbReference type="DNASU" id="279"/>
<dbReference type="Ensembl" id="ENST00000414303.7">
    <molecule id="P04746-1"/>
    <property type="protein sequence ID" value="ENSP00000397582.2"/>
    <property type="gene ID" value="ENSG00000243480.8"/>
</dbReference>
<dbReference type="GeneID" id="279"/>
<dbReference type="KEGG" id="hsa:279"/>
<dbReference type="MANE-Select" id="ENST00000414303.7">
    <property type="protein sequence ID" value="ENSP00000397582.2"/>
    <property type="RefSeq nucleotide sequence ID" value="NM_000699.4"/>
    <property type="RefSeq protein sequence ID" value="NP_000690.1"/>
</dbReference>
<dbReference type="UCSC" id="uc001dut.4">
    <molecule id="P04746-1"/>
    <property type="organism name" value="human"/>
</dbReference>
<dbReference type="AGR" id="HGNC:477"/>
<dbReference type="CTD" id="279"/>
<dbReference type="DisGeNET" id="279"/>
<dbReference type="GeneCards" id="AMY2A"/>
<dbReference type="HGNC" id="HGNC:477">
    <property type="gene designation" value="AMY2A"/>
</dbReference>
<dbReference type="HPA" id="ENSG00000243480">
    <property type="expression patterns" value="Tissue enriched (pancreas)"/>
</dbReference>
<dbReference type="MIM" id="104650">
    <property type="type" value="gene"/>
</dbReference>
<dbReference type="neXtProt" id="NX_P04746"/>
<dbReference type="OpenTargets" id="ENSG00000243480"/>
<dbReference type="PharmGKB" id="PA24784"/>
<dbReference type="VEuPathDB" id="HostDB:ENSG00000243480"/>
<dbReference type="eggNOG" id="KOG2212">
    <property type="taxonomic scope" value="Eukaryota"/>
</dbReference>
<dbReference type="GeneTree" id="ENSGT00940000154802"/>
<dbReference type="HOGENOM" id="CLU_013336_2_1_1"/>
<dbReference type="InParanoid" id="P04746"/>
<dbReference type="OMA" id="EHREVWS"/>
<dbReference type="OrthoDB" id="550577at2759"/>
<dbReference type="PAN-GO" id="P04746">
    <property type="GO annotations" value="3 GO annotations based on evolutionary models"/>
</dbReference>
<dbReference type="PhylomeDB" id="P04746"/>
<dbReference type="TreeFam" id="TF312850"/>
<dbReference type="BRENDA" id="3.2.1.1">
    <property type="organism ID" value="2681"/>
</dbReference>
<dbReference type="PathwayCommons" id="P04746"/>
<dbReference type="Reactome" id="R-HSA-189085">
    <property type="pathway name" value="Digestion of dietary carbohydrate"/>
</dbReference>
<dbReference type="Reactome" id="R-HSA-9925561">
    <property type="pathway name" value="Developmental Lineage of Pancreatic Acinar Cells"/>
</dbReference>
<dbReference type="SABIO-RK" id="P04746"/>
<dbReference type="SignaLink" id="P04746"/>
<dbReference type="BioGRID-ORCS" id="279">
    <property type="hits" value="26 hits in 1045 CRISPR screens"/>
</dbReference>
<dbReference type="ChiTaRS" id="AMY2A">
    <property type="organism name" value="human"/>
</dbReference>
<dbReference type="EvolutionaryTrace" id="P04746"/>
<dbReference type="GeneWiki" id="AMY2A"/>
<dbReference type="GenomeRNAi" id="279"/>
<dbReference type="Pharos" id="P04746">
    <property type="development level" value="Tclin"/>
</dbReference>
<dbReference type="PRO" id="PR:P04746"/>
<dbReference type="Proteomes" id="UP000005640">
    <property type="component" value="Chromosome 1"/>
</dbReference>
<dbReference type="RNAct" id="P04746">
    <property type="molecule type" value="protein"/>
</dbReference>
<dbReference type="Bgee" id="ENSG00000243480">
    <property type="expression patterns" value="Expressed in body of pancreas and 89 other cell types or tissues"/>
</dbReference>
<dbReference type="ExpressionAtlas" id="P04746">
    <property type="expression patterns" value="baseline and differential"/>
</dbReference>
<dbReference type="GO" id="GO:0070062">
    <property type="term" value="C:extracellular exosome"/>
    <property type="evidence" value="ECO:0007005"/>
    <property type="project" value="UniProtKB"/>
</dbReference>
<dbReference type="GO" id="GO:0005576">
    <property type="term" value="C:extracellular region"/>
    <property type="evidence" value="ECO:0000304"/>
    <property type="project" value="Reactome"/>
</dbReference>
<dbReference type="GO" id="GO:0005615">
    <property type="term" value="C:extracellular space"/>
    <property type="evidence" value="ECO:0000314"/>
    <property type="project" value="UniProtKB"/>
</dbReference>
<dbReference type="GO" id="GO:0004556">
    <property type="term" value="F:alpha-amylase activity"/>
    <property type="evidence" value="ECO:0000314"/>
    <property type="project" value="UniProtKB"/>
</dbReference>
<dbReference type="GO" id="GO:0005509">
    <property type="term" value="F:calcium ion binding"/>
    <property type="evidence" value="ECO:0000314"/>
    <property type="project" value="UniProtKB"/>
</dbReference>
<dbReference type="GO" id="GO:0031404">
    <property type="term" value="F:chloride ion binding"/>
    <property type="evidence" value="ECO:0000314"/>
    <property type="project" value="UniProtKB"/>
</dbReference>
<dbReference type="GO" id="GO:0016052">
    <property type="term" value="P:carbohydrate catabolic process"/>
    <property type="evidence" value="ECO:0000314"/>
    <property type="project" value="UniProtKB"/>
</dbReference>
<dbReference type="GO" id="GO:0005975">
    <property type="term" value="P:carbohydrate metabolic process"/>
    <property type="evidence" value="ECO:0000318"/>
    <property type="project" value="GO_Central"/>
</dbReference>
<dbReference type="GO" id="GO:0044245">
    <property type="term" value="P:polysaccharide digestion"/>
    <property type="evidence" value="ECO:0000304"/>
    <property type="project" value="Reactome"/>
</dbReference>
<dbReference type="CDD" id="cd11317">
    <property type="entry name" value="AmyAc_bac_euk_AmyA"/>
    <property type="match status" value="1"/>
</dbReference>
<dbReference type="FunFam" id="2.60.40.1180:FF:000020">
    <property type="entry name" value="Pancreatic alpha-amylase"/>
    <property type="match status" value="1"/>
</dbReference>
<dbReference type="FunFam" id="3.20.20.80:FF:000056">
    <property type="entry name" value="Pancreatic alpha-amylase"/>
    <property type="match status" value="1"/>
</dbReference>
<dbReference type="Gene3D" id="3.20.20.80">
    <property type="entry name" value="Glycosidases"/>
    <property type="match status" value="1"/>
</dbReference>
<dbReference type="Gene3D" id="2.60.40.1180">
    <property type="entry name" value="Golgi alpha-mannosidase II"/>
    <property type="match status" value="1"/>
</dbReference>
<dbReference type="InterPro" id="IPR006048">
    <property type="entry name" value="A-amylase/branching_C"/>
</dbReference>
<dbReference type="InterPro" id="IPR031319">
    <property type="entry name" value="A-amylase_C"/>
</dbReference>
<dbReference type="InterPro" id="IPR006046">
    <property type="entry name" value="Alpha_amylase"/>
</dbReference>
<dbReference type="InterPro" id="IPR006047">
    <property type="entry name" value="Glyco_hydro_13_cat_dom"/>
</dbReference>
<dbReference type="InterPro" id="IPR013780">
    <property type="entry name" value="Glyco_hydro_b"/>
</dbReference>
<dbReference type="InterPro" id="IPR017853">
    <property type="entry name" value="Glycoside_hydrolase_SF"/>
</dbReference>
<dbReference type="PANTHER" id="PTHR43447">
    <property type="entry name" value="ALPHA-AMYLASE"/>
    <property type="match status" value="1"/>
</dbReference>
<dbReference type="Pfam" id="PF00128">
    <property type="entry name" value="Alpha-amylase"/>
    <property type="match status" value="1"/>
</dbReference>
<dbReference type="Pfam" id="PF02806">
    <property type="entry name" value="Alpha-amylase_C"/>
    <property type="match status" value="1"/>
</dbReference>
<dbReference type="PRINTS" id="PR00110">
    <property type="entry name" value="ALPHAAMYLASE"/>
</dbReference>
<dbReference type="SMART" id="SM00642">
    <property type="entry name" value="Aamy"/>
    <property type="match status" value="1"/>
</dbReference>
<dbReference type="SMART" id="SM00632">
    <property type="entry name" value="Aamy_C"/>
    <property type="match status" value="1"/>
</dbReference>
<dbReference type="SUPFAM" id="SSF51445">
    <property type="entry name" value="(Trans)glycosidases"/>
    <property type="match status" value="1"/>
</dbReference>
<dbReference type="SUPFAM" id="SSF51011">
    <property type="entry name" value="Glycosyl hydrolase domain"/>
    <property type="match status" value="1"/>
</dbReference>
<sequence length="511" mass="57707">MKFFLLLFTIGFCWAQYSPNTQQGRTSIVHLFEWRWVDIALECERYLAPKGFGGVQVSPPNENVAIYNPFRPWWERYQPVSYKLCTRSGNEDEFRNMVTRCNNVGVRIYVDAVINHMCGNAVSAGTSSTCGSYFNPGSRDFPAVPYSGWDFNDGKCKTGSGDIENYNDATQVRDCRLTGLLDLALEKDYVRSKIAEYMNHLIDIGVAGFRLDASKHMWPGDIKAILDKLHNLNSNWFPAGSKPFIYQEVIDLGGEPIKSSDYFGNGRVTEFKYGAKLGTVIRKWNGEKMSYLKNWGEGWGFVPSDRALVFVDNHDNQRGHGAGGASILTFWDARLYKMAVGFMLAHPYGFTRVMSSYRWPRQFQNGNDVNDWVGPPNNNGVIKEVTINPDTTCGNDWVCEHRWRQIRNMVIFRNVVDGQPFTNWYDNGSNQVAFGRGNRGFIVFNNDDWSFSLTLQTGLPAGTYCDVISGDKINGNCTGIKIYVSDDGKAHFSISNSAEDPFIAIHAESKL</sequence>